<proteinExistence type="inferred from homology"/>
<sequence>MSSITLALSKGRIFEETLPLLAAAGITPTDNPESSRKLIIGTNRPEVRLVIVRATDTPTYVQYGAADLGIAGKDVLIEHGGAGLYQPLDLNIARCRLCVAVRKGFDYAAATRPGGRIRVATKYINSAKAHFAGKGMHVDLIKLYGSMELAPLVGLADAIVDLVSTGSTLRANNLEEVEDIAPISSRLIVNQASLKLKRELIQPVLDAFAGAIKP</sequence>
<name>HIS1_AZOSB</name>
<protein>
    <recommendedName>
        <fullName evidence="1">ATP phosphoribosyltransferase</fullName>
        <shortName evidence="1">ATP-PRT</shortName>
        <shortName evidence="1">ATP-PRTase</shortName>
        <ecNumber evidence="1">2.4.2.17</ecNumber>
    </recommendedName>
</protein>
<accession>A1K3M9</accession>
<gene>
    <name evidence="1" type="primary">hisG</name>
    <name type="ordered locus">azo0817</name>
</gene>
<comment type="function">
    <text evidence="1">Catalyzes the condensation of ATP and 5-phosphoribose 1-diphosphate to form N'-(5'-phosphoribosyl)-ATP (PR-ATP). Has a crucial role in the pathway because the rate of histidine biosynthesis seems to be controlled primarily by regulation of HisG enzymatic activity.</text>
</comment>
<comment type="catalytic activity">
    <reaction evidence="1">
        <text>1-(5-phospho-beta-D-ribosyl)-ATP + diphosphate = 5-phospho-alpha-D-ribose 1-diphosphate + ATP</text>
        <dbReference type="Rhea" id="RHEA:18473"/>
        <dbReference type="ChEBI" id="CHEBI:30616"/>
        <dbReference type="ChEBI" id="CHEBI:33019"/>
        <dbReference type="ChEBI" id="CHEBI:58017"/>
        <dbReference type="ChEBI" id="CHEBI:73183"/>
        <dbReference type="EC" id="2.4.2.17"/>
    </reaction>
</comment>
<comment type="pathway">
    <text evidence="1">Amino-acid biosynthesis; L-histidine biosynthesis; L-histidine from 5-phospho-alpha-D-ribose 1-diphosphate: step 1/9.</text>
</comment>
<comment type="subunit">
    <text evidence="1">Heteromultimer composed of HisG and HisZ subunits.</text>
</comment>
<comment type="subcellular location">
    <subcellularLocation>
        <location evidence="1">Cytoplasm</location>
    </subcellularLocation>
</comment>
<comment type="domain">
    <text>Lacks the C-terminal regulatory region which is replaced by HisZ.</text>
</comment>
<comment type="similarity">
    <text evidence="1">Belongs to the ATP phosphoribosyltransferase family. Short subfamily.</text>
</comment>
<comment type="sequence caution" evidence="2">
    <conflict type="erroneous initiation">
        <sequence resource="EMBL-CDS" id="CAL93434"/>
    </conflict>
</comment>
<organism>
    <name type="scientific">Azoarcus sp. (strain BH72)</name>
    <dbReference type="NCBI Taxonomy" id="418699"/>
    <lineage>
        <taxon>Bacteria</taxon>
        <taxon>Pseudomonadati</taxon>
        <taxon>Pseudomonadota</taxon>
        <taxon>Betaproteobacteria</taxon>
        <taxon>Rhodocyclales</taxon>
        <taxon>Zoogloeaceae</taxon>
        <taxon>Azoarcus</taxon>
    </lineage>
</organism>
<keyword id="KW-0028">Amino-acid biosynthesis</keyword>
<keyword id="KW-0067">ATP-binding</keyword>
<keyword id="KW-0963">Cytoplasm</keyword>
<keyword id="KW-0328">Glycosyltransferase</keyword>
<keyword id="KW-0368">Histidine biosynthesis</keyword>
<keyword id="KW-0547">Nucleotide-binding</keyword>
<keyword id="KW-1185">Reference proteome</keyword>
<keyword id="KW-0808">Transferase</keyword>
<reference key="1">
    <citation type="journal article" date="2006" name="Nat. Biotechnol.">
        <title>Complete genome of the mutualistic, N2-fixing grass endophyte Azoarcus sp. strain BH72.</title>
        <authorList>
            <person name="Krause A."/>
            <person name="Ramakumar A."/>
            <person name="Bartels D."/>
            <person name="Battistoni F."/>
            <person name="Bekel T."/>
            <person name="Boch J."/>
            <person name="Boehm M."/>
            <person name="Friedrich F."/>
            <person name="Hurek T."/>
            <person name="Krause L."/>
            <person name="Linke B."/>
            <person name="McHardy A.C."/>
            <person name="Sarkar A."/>
            <person name="Schneiker S."/>
            <person name="Syed A.A."/>
            <person name="Thauer R."/>
            <person name="Vorhoelter F.-J."/>
            <person name="Weidner S."/>
            <person name="Puehler A."/>
            <person name="Reinhold-Hurek B."/>
            <person name="Kaiser O."/>
            <person name="Goesmann A."/>
        </authorList>
    </citation>
    <scope>NUCLEOTIDE SEQUENCE [LARGE SCALE GENOMIC DNA]</scope>
    <source>
        <strain>BH72</strain>
    </source>
</reference>
<dbReference type="EC" id="2.4.2.17" evidence="1"/>
<dbReference type="EMBL" id="AM406670">
    <property type="protein sequence ID" value="CAL93434.1"/>
    <property type="status" value="ALT_INIT"/>
    <property type="molecule type" value="Genomic_DNA"/>
</dbReference>
<dbReference type="RefSeq" id="WP_041643290.1">
    <property type="nucleotide sequence ID" value="NC_008702.1"/>
</dbReference>
<dbReference type="SMR" id="A1K3M9"/>
<dbReference type="STRING" id="62928.azo0817"/>
<dbReference type="KEGG" id="azo:azo0817"/>
<dbReference type="eggNOG" id="COG0040">
    <property type="taxonomic scope" value="Bacteria"/>
</dbReference>
<dbReference type="HOGENOM" id="CLU_038115_2_0_4"/>
<dbReference type="OrthoDB" id="9801867at2"/>
<dbReference type="UniPathway" id="UPA00031">
    <property type="reaction ID" value="UER00006"/>
</dbReference>
<dbReference type="Proteomes" id="UP000002588">
    <property type="component" value="Chromosome"/>
</dbReference>
<dbReference type="GO" id="GO:0005737">
    <property type="term" value="C:cytoplasm"/>
    <property type="evidence" value="ECO:0007669"/>
    <property type="project" value="UniProtKB-SubCell"/>
</dbReference>
<dbReference type="GO" id="GO:0005524">
    <property type="term" value="F:ATP binding"/>
    <property type="evidence" value="ECO:0007669"/>
    <property type="project" value="UniProtKB-KW"/>
</dbReference>
<dbReference type="GO" id="GO:0003879">
    <property type="term" value="F:ATP phosphoribosyltransferase activity"/>
    <property type="evidence" value="ECO:0007669"/>
    <property type="project" value="UniProtKB-UniRule"/>
</dbReference>
<dbReference type="GO" id="GO:0000105">
    <property type="term" value="P:L-histidine biosynthetic process"/>
    <property type="evidence" value="ECO:0007669"/>
    <property type="project" value="UniProtKB-UniRule"/>
</dbReference>
<dbReference type="CDD" id="cd13595">
    <property type="entry name" value="PBP2_HisGs"/>
    <property type="match status" value="1"/>
</dbReference>
<dbReference type="FunFam" id="3.40.190.10:FF:000008">
    <property type="entry name" value="ATP phosphoribosyltransferase"/>
    <property type="match status" value="1"/>
</dbReference>
<dbReference type="FunFam" id="3.40.190.10:FF:000011">
    <property type="entry name" value="ATP phosphoribosyltransferase"/>
    <property type="match status" value="1"/>
</dbReference>
<dbReference type="Gene3D" id="3.40.190.10">
    <property type="entry name" value="Periplasmic binding protein-like II"/>
    <property type="match status" value="2"/>
</dbReference>
<dbReference type="HAMAP" id="MF_01018">
    <property type="entry name" value="HisG_Short"/>
    <property type="match status" value="1"/>
</dbReference>
<dbReference type="InterPro" id="IPR013820">
    <property type="entry name" value="ATP_PRibTrfase_cat"/>
</dbReference>
<dbReference type="InterPro" id="IPR018198">
    <property type="entry name" value="ATP_PRibTrfase_CS"/>
</dbReference>
<dbReference type="InterPro" id="IPR001348">
    <property type="entry name" value="ATP_PRibTrfase_HisG"/>
</dbReference>
<dbReference type="InterPro" id="IPR024893">
    <property type="entry name" value="ATP_PRibTrfase_HisG_short"/>
</dbReference>
<dbReference type="NCBIfam" id="TIGR00070">
    <property type="entry name" value="hisG"/>
    <property type="match status" value="1"/>
</dbReference>
<dbReference type="PANTHER" id="PTHR21403:SF8">
    <property type="entry name" value="ATP PHOSPHORIBOSYLTRANSFERASE"/>
    <property type="match status" value="1"/>
</dbReference>
<dbReference type="PANTHER" id="PTHR21403">
    <property type="entry name" value="ATP PHOSPHORIBOSYLTRANSFERASE ATP-PRTASE"/>
    <property type="match status" value="1"/>
</dbReference>
<dbReference type="Pfam" id="PF01634">
    <property type="entry name" value="HisG"/>
    <property type="match status" value="1"/>
</dbReference>
<dbReference type="SUPFAM" id="SSF53850">
    <property type="entry name" value="Periplasmic binding protein-like II"/>
    <property type="match status" value="1"/>
</dbReference>
<dbReference type="PROSITE" id="PS01316">
    <property type="entry name" value="ATP_P_PHORIBOSYLTR"/>
    <property type="match status" value="1"/>
</dbReference>
<evidence type="ECO:0000255" key="1">
    <source>
        <dbReference type="HAMAP-Rule" id="MF_01018"/>
    </source>
</evidence>
<evidence type="ECO:0000305" key="2"/>
<feature type="chain" id="PRO_0000319513" description="ATP phosphoribosyltransferase">
    <location>
        <begin position="1"/>
        <end position="214"/>
    </location>
</feature>